<dbReference type="EC" id="3.1.-.-" evidence="1"/>
<dbReference type="EMBL" id="AL513382">
    <property type="protein sequence ID" value="CAD07618.1"/>
    <property type="molecule type" value="Genomic_DNA"/>
</dbReference>
<dbReference type="EMBL" id="AE014613">
    <property type="protein sequence ID" value="AAO68185.1"/>
    <property type="molecule type" value="Genomic_DNA"/>
</dbReference>
<dbReference type="RefSeq" id="NP_456927.1">
    <property type="nucleotide sequence ID" value="NC_003198.1"/>
</dbReference>
<dbReference type="RefSeq" id="WP_000730794.1">
    <property type="nucleotide sequence ID" value="NZ_WSUR01000045.1"/>
</dbReference>
<dbReference type="SMR" id="P67247"/>
<dbReference type="STRING" id="220341.gene:17586515"/>
<dbReference type="KEGG" id="stt:t0478"/>
<dbReference type="KEGG" id="sty:STY2618"/>
<dbReference type="PATRIC" id="fig|220341.7.peg.2651"/>
<dbReference type="eggNOG" id="COG2840">
    <property type="taxonomic scope" value="Bacteria"/>
</dbReference>
<dbReference type="HOGENOM" id="CLU_055978_4_0_6"/>
<dbReference type="OMA" id="CIMHGHG"/>
<dbReference type="OrthoDB" id="5795446at2"/>
<dbReference type="Proteomes" id="UP000000541">
    <property type="component" value="Chromosome"/>
</dbReference>
<dbReference type="Proteomes" id="UP000002670">
    <property type="component" value="Chromosome"/>
</dbReference>
<dbReference type="GO" id="GO:0004521">
    <property type="term" value="F:RNA endonuclease activity"/>
    <property type="evidence" value="ECO:0007669"/>
    <property type="project" value="UniProtKB-UniRule"/>
</dbReference>
<dbReference type="GO" id="GO:0019843">
    <property type="term" value="F:rRNA binding"/>
    <property type="evidence" value="ECO:0007669"/>
    <property type="project" value="UniProtKB-UniRule"/>
</dbReference>
<dbReference type="GO" id="GO:0072344">
    <property type="term" value="P:rescue of stalled ribosome"/>
    <property type="evidence" value="ECO:0007669"/>
    <property type="project" value="UniProtKB-UniRule"/>
</dbReference>
<dbReference type="Gene3D" id="3.30.1370.110">
    <property type="match status" value="1"/>
</dbReference>
<dbReference type="HAMAP" id="MF_01042">
    <property type="entry name" value="SmrB"/>
    <property type="match status" value="1"/>
</dbReference>
<dbReference type="InterPro" id="IPR002625">
    <property type="entry name" value="Smr_dom"/>
</dbReference>
<dbReference type="InterPro" id="IPR036063">
    <property type="entry name" value="Smr_dom_sf"/>
</dbReference>
<dbReference type="InterPro" id="IPR022990">
    <property type="entry name" value="SmrB-like"/>
</dbReference>
<dbReference type="NCBIfam" id="NF003432">
    <property type="entry name" value="PRK04946.1"/>
    <property type="match status" value="1"/>
</dbReference>
<dbReference type="PANTHER" id="PTHR35562">
    <property type="entry name" value="DNA ENDONUCLEASE SMRA-RELATED"/>
    <property type="match status" value="1"/>
</dbReference>
<dbReference type="PANTHER" id="PTHR35562:SF1">
    <property type="entry name" value="UPF0115 PROTEIN YFCN"/>
    <property type="match status" value="1"/>
</dbReference>
<dbReference type="Pfam" id="PF01713">
    <property type="entry name" value="Smr"/>
    <property type="match status" value="1"/>
</dbReference>
<dbReference type="SMART" id="SM00463">
    <property type="entry name" value="SMR"/>
    <property type="match status" value="1"/>
</dbReference>
<dbReference type="SUPFAM" id="SSF160443">
    <property type="entry name" value="SMR domain-like"/>
    <property type="match status" value="1"/>
</dbReference>
<dbReference type="PROSITE" id="PS50828">
    <property type="entry name" value="SMR"/>
    <property type="match status" value="1"/>
</dbReference>
<keyword id="KW-0255">Endonuclease</keyword>
<keyword id="KW-0378">Hydrolase</keyword>
<keyword id="KW-0540">Nuclease</keyword>
<keyword id="KW-0694">RNA-binding</keyword>
<keyword id="KW-0699">rRNA-binding</keyword>
<accession>P67247</accession>
<accession>Q8XFE8</accession>
<name>SMRB_SALTI</name>
<proteinExistence type="inferred from homology"/>
<evidence type="ECO:0000255" key="1">
    <source>
        <dbReference type="HAMAP-Rule" id="MF_01042"/>
    </source>
</evidence>
<reference key="1">
    <citation type="journal article" date="2001" name="Nature">
        <title>Complete genome sequence of a multiple drug resistant Salmonella enterica serovar Typhi CT18.</title>
        <authorList>
            <person name="Parkhill J."/>
            <person name="Dougan G."/>
            <person name="James K.D."/>
            <person name="Thomson N.R."/>
            <person name="Pickard D."/>
            <person name="Wain J."/>
            <person name="Churcher C.M."/>
            <person name="Mungall K.L."/>
            <person name="Bentley S.D."/>
            <person name="Holden M.T.G."/>
            <person name="Sebaihia M."/>
            <person name="Baker S."/>
            <person name="Basham D."/>
            <person name="Brooks K."/>
            <person name="Chillingworth T."/>
            <person name="Connerton P."/>
            <person name="Cronin A."/>
            <person name="Davis P."/>
            <person name="Davies R.M."/>
            <person name="Dowd L."/>
            <person name="White N."/>
            <person name="Farrar J."/>
            <person name="Feltwell T."/>
            <person name="Hamlin N."/>
            <person name="Haque A."/>
            <person name="Hien T.T."/>
            <person name="Holroyd S."/>
            <person name="Jagels K."/>
            <person name="Krogh A."/>
            <person name="Larsen T.S."/>
            <person name="Leather S."/>
            <person name="Moule S."/>
            <person name="O'Gaora P."/>
            <person name="Parry C."/>
            <person name="Quail M.A."/>
            <person name="Rutherford K.M."/>
            <person name="Simmonds M."/>
            <person name="Skelton J."/>
            <person name="Stevens K."/>
            <person name="Whitehead S."/>
            <person name="Barrell B.G."/>
        </authorList>
    </citation>
    <scope>NUCLEOTIDE SEQUENCE [LARGE SCALE GENOMIC DNA]</scope>
    <source>
        <strain>CT18</strain>
    </source>
</reference>
<reference key="2">
    <citation type="journal article" date="2003" name="J. Bacteriol.">
        <title>Comparative genomics of Salmonella enterica serovar Typhi strains Ty2 and CT18.</title>
        <authorList>
            <person name="Deng W."/>
            <person name="Liou S.-R."/>
            <person name="Plunkett G. III"/>
            <person name="Mayhew G.F."/>
            <person name="Rose D.J."/>
            <person name="Burland V."/>
            <person name="Kodoyianni V."/>
            <person name="Schwartz D.C."/>
            <person name="Blattner F.R."/>
        </authorList>
    </citation>
    <scope>NUCLEOTIDE SEQUENCE [LARGE SCALE GENOMIC DNA]</scope>
    <source>
        <strain>ATCC 700931 / Ty2</strain>
    </source>
</reference>
<feature type="chain" id="PRO_0000214560" description="Ribosome rescue factor SmrB">
    <location>
        <begin position="1"/>
        <end position="183"/>
    </location>
</feature>
<feature type="domain" description="Smr" evidence="1">
    <location>
        <begin position="98"/>
        <end position="173"/>
    </location>
</feature>
<protein>
    <recommendedName>
        <fullName evidence="1">Ribosome rescue factor SmrB</fullName>
        <ecNumber evidence="1">3.1.-.-</ecNumber>
    </recommendedName>
</protein>
<gene>
    <name evidence="1" type="primary">smrB</name>
    <name type="ordered locus">STY2618</name>
    <name type="ordered locus">t0478</name>
</gene>
<comment type="function">
    <text evidence="1">Acts as a ribosome collision sensor. Detects stalled/collided disomes (pairs of ribosomes where the leading ribosome is stalled and a second ribosome has collided with it) and endonucleolytically cleaves mRNA at the 5' boundary of the stalled ribosome. Stalled/collided disomes form a new interface (primarily via the 30S subunits) that binds SmrB. Cleaved mRNA becomes available for tmRNA ligation, leading to ribosomal subunit dissociation and rescue of stalled ribosomes.</text>
</comment>
<comment type="subunit">
    <text evidence="1">Associates with collided ribosomes, but not with correctly translating polysomes.</text>
</comment>
<comment type="similarity">
    <text evidence="1">Belongs to the SmrB family.</text>
</comment>
<organism>
    <name type="scientific">Salmonella typhi</name>
    <dbReference type="NCBI Taxonomy" id="90370"/>
    <lineage>
        <taxon>Bacteria</taxon>
        <taxon>Pseudomonadati</taxon>
        <taxon>Pseudomonadota</taxon>
        <taxon>Gammaproteobacteria</taxon>
        <taxon>Enterobacterales</taxon>
        <taxon>Enterobacteriaceae</taxon>
        <taxon>Salmonella</taxon>
    </lineage>
</organism>
<sequence length="183" mass="21177">MKKKTSLSEEDQALFRQLMVGTRKIKQDTIVHRPLRKKITEVPTRRLIQEQADASHYFSDEFQPLLNTEGPVKYVREDVSHFELKKMRRGDYSPELFLDLHGLTQLQAKQELGALIAACRREHIFCACVMHGHGKHILKQQTPLWLAQHPHVMAFHQAPKEYGGDAALLVLIEVEEWQPPELP</sequence>